<name>CARA_NEIGO</name>
<dbReference type="EC" id="6.3.5.5" evidence="1"/>
<dbReference type="EMBL" id="Z54242">
    <property type="protein sequence ID" value="CAA91011.1"/>
    <property type="molecule type" value="Genomic_DNA"/>
</dbReference>
<dbReference type="EMBL" id="U11295">
    <property type="protein sequence ID" value="AAA74995.1"/>
    <property type="molecule type" value="Genomic_DNA"/>
</dbReference>
<dbReference type="SMR" id="Q50983"/>
<dbReference type="UniPathway" id="UPA00068">
    <property type="reaction ID" value="UER00171"/>
</dbReference>
<dbReference type="UniPathway" id="UPA00070">
    <property type="reaction ID" value="UER00115"/>
</dbReference>
<dbReference type="GO" id="GO:0005524">
    <property type="term" value="F:ATP binding"/>
    <property type="evidence" value="ECO:0007669"/>
    <property type="project" value="UniProtKB-UniRule"/>
</dbReference>
<dbReference type="GO" id="GO:0004088">
    <property type="term" value="F:carbamoyl-phosphate synthase (glutamine-hydrolyzing) activity"/>
    <property type="evidence" value="ECO:0007669"/>
    <property type="project" value="UniProtKB-UniRule"/>
</dbReference>
<dbReference type="GO" id="GO:0004359">
    <property type="term" value="F:glutaminase activity"/>
    <property type="evidence" value="ECO:0007669"/>
    <property type="project" value="RHEA"/>
</dbReference>
<dbReference type="GO" id="GO:0006207">
    <property type="term" value="P:'de novo' pyrimidine nucleobase biosynthetic process"/>
    <property type="evidence" value="ECO:0007669"/>
    <property type="project" value="InterPro"/>
</dbReference>
<dbReference type="GO" id="GO:0044205">
    <property type="term" value="P:'de novo' UMP biosynthetic process"/>
    <property type="evidence" value="ECO:0007669"/>
    <property type="project" value="UniProtKB-UniRule"/>
</dbReference>
<dbReference type="GO" id="GO:0006541">
    <property type="term" value="P:glutamine metabolic process"/>
    <property type="evidence" value="ECO:0007669"/>
    <property type="project" value="InterPro"/>
</dbReference>
<dbReference type="GO" id="GO:0006526">
    <property type="term" value="P:L-arginine biosynthetic process"/>
    <property type="evidence" value="ECO:0007669"/>
    <property type="project" value="UniProtKB-UniRule"/>
</dbReference>
<dbReference type="CDD" id="cd01744">
    <property type="entry name" value="GATase1_CPSase"/>
    <property type="match status" value="1"/>
</dbReference>
<dbReference type="FunFam" id="3.40.50.880:FF:000011">
    <property type="entry name" value="Carbamoyl-phosphate synthase small chain"/>
    <property type="match status" value="1"/>
</dbReference>
<dbReference type="FunFam" id="3.50.30.20:FF:000001">
    <property type="entry name" value="Carbamoyl-phosphate synthase small chain"/>
    <property type="match status" value="1"/>
</dbReference>
<dbReference type="Gene3D" id="3.40.50.880">
    <property type="match status" value="1"/>
</dbReference>
<dbReference type="Gene3D" id="3.50.30.20">
    <property type="entry name" value="Carbamoyl-phosphate synthase small subunit, N-terminal domain"/>
    <property type="match status" value="1"/>
</dbReference>
<dbReference type="HAMAP" id="MF_01209">
    <property type="entry name" value="CPSase_S_chain"/>
    <property type="match status" value="1"/>
</dbReference>
<dbReference type="InterPro" id="IPR050472">
    <property type="entry name" value="Anth_synth/Amidotransfase"/>
</dbReference>
<dbReference type="InterPro" id="IPR006274">
    <property type="entry name" value="CarbamoylP_synth_ssu"/>
</dbReference>
<dbReference type="InterPro" id="IPR002474">
    <property type="entry name" value="CarbamoylP_synth_ssu_N"/>
</dbReference>
<dbReference type="InterPro" id="IPR036480">
    <property type="entry name" value="CarbP_synth_ssu_N_sf"/>
</dbReference>
<dbReference type="InterPro" id="IPR029062">
    <property type="entry name" value="Class_I_gatase-like"/>
</dbReference>
<dbReference type="InterPro" id="IPR035686">
    <property type="entry name" value="CPSase_GATase1"/>
</dbReference>
<dbReference type="InterPro" id="IPR017926">
    <property type="entry name" value="GATASE"/>
</dbReference>
<dbReference type="NCBIfam" id="TIGR01368">
    <property type="entry name" value="CPSaseIIsmall"/>
    <property type="match status" value="1"/>
</dbReference>
<dbReference type="NCBIfam" id="NF009475">
    <property type="entry name" value="PRK12838.1"/>
    <property type="match status" value="1"/>
</dbReference>
<dbReference type="PANTHER" id="PTHR43418:SF7">
    <property type="entry name" value="CARBAMOYL-PHOSPHATE SYNTHASE SMALL CHAIN"/>
    <property type="match status" value="1"/>
</dbReference>
<dbReference type="PANTHER" id="PTHR43418">
    <property type="entry name" value="MULTIFUNCTIONAL TRYPTOPHAN BIOSYNTHESIS PROTEIN-RELATED"/>
    <property type="match status" value="1"/>
</dbReference>
<dbReference type="Pfam" id="PF00988">
    <property type="entry name" value="CPSase_sm_chain"/>
    <property type="match status" value="1"/>
</dbReference>
<dbReference type="Pfam" id="PF00117">
    <property type="entry name" value="GATase"/>
    <property type="match status" value="1"/>
</dbReference>
<dbReference type="PRINTS" id="PR00099">
    <property type="entry name" value="CPSGATASE"/>
</dbReference>
<dbReference type="PRINTS" id="PR00096">
    <property type="entry name" value="GATASE"/>
</dbReference>
<dbReference type="SMART" id="SM01097">
    <property type="entry name" value="CPSase_sm_chain"/>
    <property type="match status" value="1"/>
</dbReference>
<dbReference type="SUPFAM" id="SSF52021">
    <property type="entry name" value="Carbamoyl phosphate synthetase, small subunit N-terminal domain"/>
    <property type="match status" value="1"/>
</dbReference>
<dbReference type="SUPFAM" id="SSF52317">
    <property type="entry name" value="Class I glutamine amidotransferase-like"/>
    <property type="match status" value="1"/>
</dbReference>
<dbReference type="PROSITE" id="PS51273">
    <property type="entry name" value="GATASE_TYPE_1"/>
    <property type="match status" value="1"/>
</dbReference>
<accession>Q50983</accession>
<accession>Q59598</accession>
<reference key="1">
    <citation type="submission" date="1995-09" db="EMBL/GenBank/DDBJ databases">
        <title>The Neisseria gonorrhoae carA gene: generation of mutants and implication of pyrimidine biosynthesis for the infection of epithelial cells.</title>
        <authorList>
            <person name="Rudel T."/>
            <person name="Boxberger H.J."/>
            <person name="Pandit J."/>
            <person name="Meyer T.F."/>
        </authorList>
    </citation>
    <scope>NUCLEOTIDE SEQUENCE [GENOMIC DNA]</scope>
    <source>
        <strain>MS11</strain>
    </source>
</reference>
<reference key="2">
    <citation type="journal article" date="1995" name="Microbiology">
        <title>Organization of carbamoyl-phosphate synthase genes in Neisseria gonorrhoeae includes a large, variable intergenic sequence which is also present in other Neisseria species.</title>
        <authorList>
            <person name="Lawson F.S."/>
            <person name="Billowes F.M."/>
            <person name="Dillon J.A."/>
        </authorList>
    </citation>
    <scope>NUCLEOTIDE SEQUENCE [GENOMIC DNA]</scope>
    <source>
        <strain>CH811</strain>
    </source>
</reference>
<feature type="chain" id="PRO_0000112297" description="Carbamoyl phosphate synthase small chain">
    <location>
        <begin position="1"/>
        <end position="377"/>
    </location>
</feature>
<feature type="domain" description="Glutamine amidotransferase type-1" evidence="1">
    <location>
        <begin position="190"/>
        <end position="377"/>
    </location>
</feature>
<feature type="region of interest" description="CPSase" evidence="1">
    <location>
        <begin position="1"/>
        <end position="186"/>
    </location>
</feature>
<feature type="active site" description="Nucleophile" evidence="1">
    <location>
        <position position="266"/>
    </location>
</feature>
<feature type="active site" evidence="1">
    <location>
        <position position="350"/>
    </location>
</feature>
<feature type="active site" evidence="1">
    <location>
        <position position="352"/>
    </location>
</feature>
<feature type="binding site" evidence="1">
    <location>
        <position position="47"/>
    </location>
    <ligand>
        <name>L-glutamine</name>
        <dbReference type="ChEBI" id="CHEBI:58359"/>
    </ligand>
</feature>
<feature type="binding site" evidence="1">
    <location>
        <position position="238"/>
    </location>
    <ligand>
        <name>L-glutamine</name>
        <dbReference type="ChEBI" id="CHEBI:58359"/>
    </ligand>
</feature>
<feature type="binding site" evidence="1">
    <location>
        <position position="240"/>
    </location>
    <ligand>
        <name>L-glutamine</name>
        <dbReference type="ChEBI" id="CHEBI:58359"/>
    </ligand>
</feature>
<feature type="binding site" evidence="1">
    <location>
        <position position="267"/>
    </location>
    <ligand>
        <name>L-glutamine</name>
        <dbReference type="ChEBI" id="CHEBI:58359"/>
    </ligand>
</feature>
<feature type="binding site" evidence="1">
    <location>
        <position position="270"/>
    </location>
    <ligand>
        <name>L-glutamine</name>
        <dbReference type="ChEBI" id="CHEBI:58359"/>
    </ligand>
</feature>
<feature type="binding site" evidence="1">
    <location>
        <position position="308"/>
    </location>
    <ligand>
        <name>L-glutamine</name>
        <dbReference type="ChEBI" id="CHEBI:58359"/>
    </ligand>
</feature>
<feature type="binding site" evidence="1">
    <location>
        <position position="310"/>
    </location>
    <ligand>
        <name>L-glutamine</name>
        <dbReference type="ChEBI" id="CHEBI:58359"/>
    </ligand>
</feature>
<feature type="binding site" evidence="1">
    <location>
        <position position="311"/>
    </location>
    <ligand>
        <name>L-glutamine</name>
        <dbReference type="ChEBI" id="CHEBI:58359"/>
    </ligand>
</feature>
<feature type="sequence conflict" description="In Ref. 2; AAA74995." evidence="2" ref="2">
    <original>T</original>
    <variation>A</variation>
    <location>
        <position position="63"/>
    </location>
</feature>
<feature type="sequence conflict" description="In Ref. 2; AAA74995." evidence="2" ref="2">
    <original>SVYA</original>
    <variation>TVLP</variation>
    <location>
        <begin position="74"/>
        <end position="77"/>
    </location>
</feature>
<feature type="sequence conflict" description="In Ref. 2; AAA74995." evidence="2" ref="2">
    <location>
        <position position="127"/>
    </location>
</feature>
<feature type="sequence conflict" description="In Ref. 2; AAA74995." evidence="2" ref="2">
    <original>MLAS</original>
    <variation>ISP</variation>
    <location>
        <begin position="205"/>
        <end position="208"/>
    </location>
</feature>
<feature type="sequence conflict" description="In Ref. 2; AAA74995." evidence="2" ref="2">
    <original>NG</original>
    <variation>QR</variation>
    <location>
        <begin position="237"/>
        <end position="238"/>
    </location>
</feature>
<feature type="sequence conflict" description="In Ref. 2; AAA74995." evidence="2" ref="2">
    <original>G</original>
    <variation>A</variation>
    <location>
        <position position="248"/>
    </location>
</feature>
<feature type="sequence conflict" description="In Ref. 2; AAA74995." evidence="2" ref="2">
    <original>S</original>
    <variation>F</variation>
    <location>
        <position position="345"/>
    </location>
</feature>
<feature type="sequence conflict" description="In Ref. 2; AAA74995." evidence="2" ref="2">
    <original>S</original>
    <variation>F</variation>
    <location>
        <position position="364"/>
    </location>
</feature>
<gene>
    <name evidence="1" type="primary">carA</name>
</gene>
<keyword id="KW-0028">Amino-acid biosynthesis</keyword>
<keyword id="KW-0055">Arginine biosynthesis</keyword>
<keyword id="KW-0067">ATP-binding</keyword>
<keyword id="KW-0315">Glutamine amidotransferase</keyword>
<keyword id="KW-0436">Ligase</keyword>
<keyword id="KW-0547">Nucleotide-binding</keyword>
<keyword id="KW-0665">Pyrimidine biosynthesis</keyword>
<protein>
    <recommendedName>
        <fullName evidence="1">Carbamoyl phosphate synthase small chain</fullName>
        <ecNumber evidence="1">6.3.5.5</ecNumber>
    </recommendedName>
    <alternativeName>
        <fullName evidence="1">Carbamoyl phosphate synthetase glutamine chain</fullName>
    </alternativeName>
</protein>
<evidence type="ECO:0000255" key="1">
    <source>
        <dbReference type="HAMAP-Rule" id="MF_01209"/>
    </source>
</evidence>
<evidence type="ECO:0000305" key="2"/>
<sequence length="377" mass="40515">MNTPALLVLADGSVFHGTSIGYEGSASGEVVFNTSMTGYQEILTDPSYCKQIVTLTYPHIGNTGTNAEDEESRSVYAAGLIIRDLPLLHSNFRASESLHDYLVRNETVAIADIDTRRLTMLLREKGAQGGAILTGADATVEKAQELIAAFGSMVGKDLAKEVSCTETYEWTEGEWELGKGFVTPDKQPYHVVAYDFGVKTNILRMLASRGCRLTVVPAQTSAEDVLALNPDGVFLSNGPGDPEPCTYGIEAVQKLMESGKPIFGICLGHQLISLAIGAKTLKMRFSHHGANHPVQDLDSGKVVITSQNHGFAVDADTLPANARITHKSLFDNTLQGIELTDKPVSCFQGHPEASPGPQDVGYLSDKFIGNMKAAKQA</sequence>
<proteinExistence type="inferred from homology"/>
<organism>
    <name type="scientific">Neisseria gonorrhoeae</name>
    <dbReference type="NCBI Taxonomy" id="485"/>
    <lineage>
        <taxon>Bacteria</taxon>
        <taxon>Pseudomonadati</taxon>
        <taxon>Pseudomonadota</taxon>
        <taxon>Betaproteobacteria</taxon>
        <taxon>Neisseriales</taxon>
        <taxon>Neisseriaceae</taxon>
        <taxon>Neisseria</taxon>
    </lineage>
</organism>
<comment type="function">
    <text evidence="1">Small subunit of the glutamine-dependent carbamoyl phosphate synthetase (CPSase). CPSase catalyzes the formation of carbamoyl phosphate from the ammonia moiety of glutamine, carbonate, and phosphate donated by ATP, constituting the first step of 2 biosynthetic pathways, one leading to arginine and/or urea and the other to pyrimidine nucleotides. The small subunit (glutamine amidotransferase) binds and cleaves glutamine to supply the large subunit with the substrate ammonia.</text>
</comment>
<comment type="catalytic activity">
    <reaction evidence="1">
        <text>hydrogencarbonate + L-glutamine + 2 ATP + H2O = carbamoyl phosphate + L-glutamate + 2 ADP + phosphate + 2 H(+)</text>
        <dbReference type="Rhea" id="RHEA:18633"/>
        <dbReference type="ChEBI" id="CHEBI:15377"/>
        <dbReference type="ChEBI" id="CHEBI:15378"/>
        <dbReference type="ChEBI" id="CHEBI:17544"/>
        <dbReference type="ChEBI" id="CHEBI:29985"/>
        <dbReference type="ChEBI" id="CHEBI:30616"/>
        <dbReference type="ChEBI" id="CHEBI:43474"/>
        <dbReference type="ChEBI" id="CHEBI:58228"/>
        <dbReference type="ChEBI" id="CHEBI:58359"/>
        <dbReference type="ChEBI" id="CHEBI:456216"/>
        <dbReference type="EC" id="6.3.5.5"/>
    </reaction>
</comment>
<comment type="catalytic activity">
    <molecule>Carbamoyl phosphate synthase small chain</molecule>
    <reaction evidence="1">
        <text>L-glutamine + H2O = L-glutamate + NH4(+)</text>
        <dbReference type="Rhea" id="RHEA:15889"/>
        <dbReference type="ChEBI" id="CHEBI:15377"/>
        <dbReference type="ChEBI" id="CHEBI:28938"/>
        <dbReference type="ChEBI" id="CHEBI:29985"/>
        <dbReference type="ChEBI" id="CHEBI:58359"/>
    </reaction>
</comment>
<comment type="pathway">
    <text evidence="1">Amino-acid biosynthesis; L-arginine biosynthesis; carbamoyl phosphate from bicarbonate: step 1/1.</text>
</comment>
<comment type="pathway">
    <text evidence="1">Pyrimidine metabolism; UMP biosynthesis via de novo pathway; (S)-dihydroorotate from bicarbonate: step 1/3.</text>
</comment>
<comment type="subunit">
    <text evidence="1">Composed of two chains; the small (or glutamine) chain promotes the hydrolysis of glutamine to ammonia, which is used by the large (or ammonia) chain to synthesize carbamoyl phosphate. Tetramer of heterodimers (alpha,beta)4.</text>
</comment>
<comment type="similarity">
    <text evidence="1">Belongs to the CarA family.</text>
</comment>